<gene>
    <name evidence="1" type="primary">rplV</name>
    <name type="ordered locus">OTBS_0371</name>
</gene>
<name>RL22_ORITB</name>
<proteinExistence type="inferred from homology"/>
<evidence type="ECO:0000255" key="1">
    <source>
        <dbReference type="HAMAP-Rule" id="MF_01331"/>
    </source>
</evidence>
<evidence type="ECO:0000305" key="2"/>
<sequence length="116" mass="12948">MFEAKKSAKATLRMIKISPRKLNLITGLIRNLKVSDAIMQLKFSKKRAAVDVKKCLQSAIANAENNDGLDIDNLVVLEAIVGKGSVMKRLVPRARGKAFRIKKFFSNLYITVSEIK</sequence>
<organism>
    <name type="scientific">Orientia tsutsugamushi (strain Boryong)</name>
    <name type="common">Rickettsia tsutsugamushi</name>
    <dbReference type="NCBI Taxonomy" id="357244"/>
    <lineage>
        <taxon>Bacteria</taxon>
        <taxon>Pseudomonadati</taxon>
        <taxon>Pseudomonadota</taxon>
        <taxon>Alphaproteobacteria</taxon>
        <taxon>Rickettsiales</taxon>
        <taxon>Rickettsiaceae</taxon>
        <taxon>Rickettsieae</taxon>
        <taxon>Orientia</taxon>
    </lineage>
</organism>
<protein>
    <recommendedName>
        <fullName evidence="1">Large ribosomal subunit protein uL22</fullName>
    </recommendedName>
    <alternativeName>
        <fullName evidence="2">50S ribosomal protein L22</fullName>
    </alternativeName>
</protein>
<dbReference type="EMBL" id="AM494475">
    <property type="protein sequence ID" value="CAM79437.1"/>
    <property type="molecule type" value="Genomic_DNA"/>
</dbReference>
<dbReference type="RefSeq" id="WP_011944435.1">
    <property type="nucleotide sequence ID" value="NC_009488.1"/>
</dbReference>
<dbReference type="SMR" id="A5CCK7"/>
<dbReference type="KEGG" id="ots:OTBS_0371"/>
<dbReference type="eggNOG" id="COG0091">
    <property type="taxonomic scope" value="Bacteria"/>
</dbReference>
<dbReference type="HOGENOM" id="CLU_083987_3_0_5"/>
<dbReference type="Proteomes" id="UP000001565">
    <property type="component" value="Chromosome"/>
</dbReference>
<dbReference type="GO" id="GO:0022625">
    <property type="term" value="C:cytosolic large ribosomal subunit"/>
    <property type="evidence" value="ECO:0007669"/>
    <property type="project" value="TreeGrafter"/>
</dbReference>
<dbReference type="GO" id="GO:0019843">
    <property type="term" value="F:rRNA binding"/>
    <property type="evidence" value="ECO:0007669"/>
    <property type="project" value="UniProtKB-UniRule"/>
</dbReference>
<dbReference type="GO" id="GO:0003735">
    <property type="term" value="F:structural constituent of ribosome"/>
    <property type="evidence" value="ECO:0007669"/>
    <property type="project" value="InterPro"/>
</dbReference>
<dbReference type="GO" id="GO:0006412">
    <property type="term" value="P:translation"/>
    <property type="evidence" value="ECO:0007669"/>
    <property type="project" value="UniProtKB-UniRule"/>
</dbReference>
<dbReference type="CDD" id="cd00336">
    <property type="entry name" value="Ribosomal_L22"/>
    <property type="match status" value="1"/>
</dbReference>
<dbReference type="Gene3D" id="3.90.470.10">
    <property type="entry name" value="Ribosomal protein L22/L17"/>
    <property type="match status" value="1"/>
</dbReference>
<dbReference type="HAMAP" id="MF_01331_B">
    <property type="entry name" value="Ribosomal_uL22_B"/>
    <property type="match status" value="1"/>
</dbReference>
<dbReference type="InterPro" id="IPR001063">
    <property type="entry name" value="Ribosomal_uL22"/>
</dbReference>
<dbReference type="InterPro" id="IPR005727">
    <property type="entry name" value="Ribosomal_uL22_bac/chlpt-type"/>
</dbReference>
<dbReference type="InterPro" id="IPR047867">
    <property type="entry name" value="Ribosomal_uL22_bac/org-type"/>
</dbReference>
<dbReference type="InterPro" id="IPR018260">
    <property type="entry name" value="Ribosomal_uL22_CS"/>
</dbReference>
<dbReference type="InterPro" id="IPR036394">
    <property type="entry name" value="Ribosomal_uL22_sf"/>
</dbReference>
<dbReference type="NCBIfam" id="TIGR01044">
    <property type="entry name" value="rplV_bact"/>
    <property type="match status" value="1"/>
</dbReference>
<dbReference type="PANTHER" id="PTHR13501">
    <property type="entry name" value="CHLOROPLAST 50S RIBOSOMAL PROTEIN L22-RELATED"/>
    <property type="match status" value="1"/>
</dbReference>
<dbReference type="PANTHER" id="PTHR13501:SF8">
    <property type="entry name" value="LARGE RIBOSOMAL SUBUNIT PROTEIN UL22M"/>
    <property type="match status" value="1"/>
</dbReference>
<dbReference type="Pfam" id="PF00237">
    <property type="entry name" value="Ribosomal_L22"/>
    <property type="match status" value="1"/>
</dbReference>
<dbReference type="SUPFAM" id="SSF54843">
    <property type="entry name" value="Ribosomal protein L22"/>
    <property type="match status" value="1"/>
</dbReference>
<dbReference type="PROSITE" id="PS00464">
    <property type="entry name" value="RIBOSOMAL_L22"/>
    <property type="match status" value="1"/>
</dbReference>
<reference key="1">
    <citation type="journal article" date="2007" name="Proc. Natl. Acad. Sci. U.S.A.">
        <title>The Orientia tsutsugamushi genome reveals massive proliferation of conjugative type IV secretion system and host-cell interaction genes.</title>
        <authorList>
            <person name="Cho N.-H."/>
            <person name="Kim H.-R."/>
            <person name="Lee J.-H."/>
            <person name="Kim S.-Y."/>
            <person name="Kim J."/>
            <person name="Cha S."/>
            <person name="Kim S.-Y."/>
            <person name="Darby A.C."/>
            <person name="Fuxelius H.-H."/>
            <person name="Yin J."/>
            <person name="Kim J.H."/>
            <person name="Kim J."/>
            <person name="Lee S.J."/>
            <person name="Koh Y.-S."/>
            <person name="Jang W.-J."/>
            <person name="Park K.-H."/>
            <person name="Andersson S.G.E."/>
            <person name="Choi M.-S."/>
            <person name="Kim I.-S."/>
        </authorList>
    </citation>
    <scope>NUCLEOTIDE SEQUENCE [LARGE SCALE GENOMIC DNA]</scope>
    <source>
        <strain>Boryong</strain>
    </source>
</reference>
<accession>A5CCK7</accession>
<feature type="chain" id="PRO_1000052618" description="Large ribosomal subunit protein uL22">
    <location>
        <begin position="1"/>
        <end position="116"/>
    </location>
</feature>
<comment type="function">
    <text evidence="1">This protein binds specifically to 23S rRNA; its binding is stimulated by other ribosomal proteins, e.g. L4, L17, and L20. It is important during the early stages of 50S assembly. It makes multiple contacts with different domains of the 23S rRNA in the assembled 50S subunit and ribosome (By similarity).</text>
</comment>
<comment type="function">
    <text evidence="1">The globular domain of the protein is located near the polypeptide exit tunnel on the outside of the subunit, while an extended beta-hairpin is found that lines the wall of the exit tunnel in the center of the 70S ribosome.</text>
</comment>
<comment type="subunit">
    <text evidence="1">Part of the 50S ribosomal subunit.</text>
</comment>
<comment type="similarity">
    <text evidence="1">Belongs to the universal ribosomal protein uL22 family.</text>
</comment>
<keyword id="KW-1185">Reference proteome</keyword>
<keyword id="KW-0687">Ribonucleoprotein</keyword>
<keyword id="KW-0689">Ribosomal protein</keyword>
<keyword id="KW-0694">RNA-binding</keyword>
<keyword id="KW-0699">rRNA-binding</keyword>